<accession>Q61885</accession>
<accession>P70364</accession>
<accession>Q62003</accession>
<gene>
    <name type="primary">Mog</name>
</gene>
<dbReference type="EMBL" id="L29503">
    <property type="protein sequence ID" value="AAC42023.1"/>
    <property type="molecule type" value="Genomic_DNA"/>
</dbReference>
<dbReference type="EMBL" id="L29498">
    <property type="protein sequence ID" value="AAC42023.1"/>
    <property type="status" value="JOINED"/>
    <property type="molecule type" value="Genomic_DNA"/>
</dbReference>
<dbReference type="EMBL" id="L29500">
    <property type="protein sequence ID" value="AAC42023.1"/>
    <property type="status" value="JOINED"/>
    <property type="molecule type" value="Genomic_DNA"/>
</dbReference>
<dbReference type="EMBL" id="L29501">
    <property type="protein sequence ID" value="AAC42023.1"/>
    <property type="status" value="JOINED"/>
    <property type="molecule type" value="Genomic_DNA"/>
</dbReference>
<dbReference type="EMBL" id="L29499">
    <property type="protein sequence ID" value="AAC42023.1"/>
    <property type="status" value="JOINED"/>
    <property type="molecule type" value="Genomic_DNA"/>
</dbReference>
<dbReference type="EMBL" id="L29502">
    <property type="protein sequence ID" value="AAC42023.1"/>
    <property type="status" value="JOINED"/>
    <property type="molecule type" value="Genomic_DNA"/>
</dbReference>
<dbReference type="EMBL" id="U64572">
    <property type="protein sequence ID" value="AAB08096.1"/>
    <property type="molecule type" value="mRNA"/>
</dbReference>
<dbReference type="EMBL" id="L20942">
    <property type="protein sequence ID" value="AAA03180.1"/>
    <property type="molecule type" value="mRNA"/>
</dbReference>
<dbReference type="PIR" id="A55717">
    <property type="entry name" value="A55717"/>
</dbReference>
<dbReference type="RefSeq" id="NP_034944.2">
    <property type="nucleotide sequence ID" value="NM_010814.2"/>
</dbReference>
<dbReference type="PDB" id="1PY9">
    <property type="method" value="X-ray"/>
    <property type="resolution" value="1.80 A"/>
    <property type="chains" value="A=30-145"/>
</dbReference>
<dbReference type="PDBsum" id="1PY9"/>
<dbReference type="SMR" id="Q61885"/>
<dbReference type="BioGRID" id="201465">
    <property type="interactions" value="8"/>
</dbReference>
<dbReference type="FunCoup" id="Q61885">
    <property type="interactions" value="693"/>
</dbReference>
<dbReference type="IntAct" id="Q61885">
    <property type="interactions" value="4"/>
</dbReference>
<dbReference type="MINT" id="Q61885"/>
<dbReference type="STRING" id="10090.ENSMUSP00000099726"/>
<dbReference type="GlyConnect" id="2520">
    <property type="glycosylation" value="15 N-Linked glycans (1 site)"/>
</dbReference>
<dbReference type="GlyCosmos" id="Q61885">
    <property type="glycosylation" value="1 site, 14 glycans"/>
</dbReference>
<dbReference type="GlyGen" id="Q61885">
    <property type="glycosylation" value="2 sites, 15 N-linked glycans (1 site), 1 O-linked glycan (1 site)"/>
</dbReference>
<dbReference type="iPTMnet" id="Q61885"/>
<dbReference type="PhosphoSitePlus" id="Q61885"/>
<dbReference type="SwissPalm" id="Q61885"/>
<dbReference type="PaxDb" id="10090-ENSMUSP00000099726"/>
<dbReference type="ProteomicsDB" id="290275"/>
<dbReference type="DNASU" id="17441"/>
<dbReference type="GeneID" id="17441"/>
<dbReference type="KEGG" id="mmu:17441"/>
<dbReference type="AGR" id="MGI:97435"/>
<dbReference type="CTD" id="4340"/>
<dbReference type="MGI" id="MGI:97435">
    <property type="gene designation" value="Mog"/>
</dbReference>
<dbReference type="eggNOG" id="ENOG502SQC1">
    <property type="taxonomic scope" value="Eukaryota"/>
</dbReference>
<dbReference type="InParanoid" id="Q61885"/>
<dbReference type="OrthoDB" id="9049620at2759"/>
<dbReference type="BioGRID-ORCS" id="17441">
    <property type="hits" value="2 hits in 77 CRISPR screens"/>
</dbReference>
<dbReference type="CD-CODE" id="CE726F99">
    <property type="entry name" value="Postsynaptic density"/>
</dbReference>
<dbReference type="EvolutionaryTrace" id="Q61885"/>
<dbReference type="PRO" id="PR:Q61885"/>
<dbReference type="Proteomes" id="UP000000589">
    <property type="component" value="Unplaced"/>
</dbReference>
<dbReference type="RNAct" id="Q61885">
    <property type="molecule type" value="protein"/>
</dbReference>
<dbReference type="GO" id="GO:0016020">
    <property type="term" value="C:membrane"/>
    <property type="evidence" value="ECO:0007669"/>
    <property type="project" value="UniProtKB-SubCell"/>
</dbReference>
<dbReference type="GO" id="GO:0043209">
    <property type="term" value="C:myelin sheath"/>
    <property type="evidence" value="ECO:0007005"/>
    <property type="project" value="UniProtKB"/>
</dbReference>
<dbReference type="GO" id="GO:0007155">
    <property type="term" value="P:cell adhesion"/>
    <property type="evidence" value="ECO:0007669"/>
    <property type="project" value="UniProtKB-KW"/>
</dbReference>
<dbReference type="CDD" id="cd05713">
    <property type="entry name" value="IgV_MOG_like"/>
    <property type="match status" value="1"/>
</dbReference>
<dbReference type="FunFam" id="2.60.40.10:FF:000183">
    <property type="entry name" value="Myelin-oligodendrocyte glycoprotein"/>
    <property type="match status" value="1"/>
</dbReference>
<dbReference type="Gene3D" id="2.60.40.10">
    <property type="entry name" value="Immunoglobulins"/>
    <property type="match status" value="1"/>
</dbReference>
<dbReference type="InterPro" id="IPR007110">
    <property type="entry name" value="Ig-like_dom"/>
</dbReference>
<dbReference type="InterPro" id="IPR036179">
    <property type="entry name" value="Ig-like_dom_sf"/>
</dbReference>
<dbReference type="InterPro" id="IPR013783">
    <property type="entry name" value="Ig-like_fold"/>
</dbReference>
<dbReference type="InterPro" id="IPR003599">
    <property type="entry name" value="Ig_sub"/>
</dbReference>
<dbReference type="InterPro" id="IPR013106">
    <property type="entry name" value="Ig_V-set"/>
</dbReference>
<dbReference type="InterPro" id="IPR050504">
    <property type="entry name" value="IgSF_BTN/MOG"/>
</dbReference>
<dbReference type="InterPro" id="IPR016663">
    <property type="entry name" value="Myelin-oligodendrocyte_glycop"/>
</dbReference>
<dbReference type="PANTHER" id="PTHR24100">
    <property type="entry name" value="BUTYROPHILIN"/>
    <property type="match status" value="1"/>
</dbReference>
<dbReference type="PANTHER" id="PTHR24100:SF71">
    <property type="entry name" value="MYELIN-OLIGODENDROCYTE GLYCOPROTEIN"/>
    <property type="match status" value="1"/>
</dbReference>
<dbReference type="Pfam" id="PF07686">
    <property type="entry name" value="V-set"/>
    <property type="match status" value="1"/>
</dbReference>
<dbReference type="PIRSF" id="PIRSF016522">
    <property type="entry name" value="MOG"/>
    <property type="match status" value="1"/>
</dbReference>
<dbReference type="SMART" id="SM00409">
    <property type="entry name" value="IG"/>
    <property type="match status" value="1"/>
</dbReference>
<dbReference type="SMART" id="SM00406">
    <property type="entry name" value="IGv"/>
    <property type="match status" value="1"/>
</dbReference>
<dbReference type="SUPFAM" id="SSF48726">
    <property type="entry name" value="Immunoglobulin"/>
    <property type="match status" value="1"/>
</dbReference>
<dbReference type="PROSITE" id="PS50835">
    <property type="entry name" value="IG_LIKE"/>
    <property type="match status" value="1"/>
</dbReference>
<keyword id="KW-0002">3D-structure</keyword>
<keyword id="KW-0130">Cell adhesion</keyword>
<keyword id="KW-0903">Direct protein sequencing</keyword>
<keyword id="KW-1015">Disulfide bond</keyword>
<keyword id="KW-0325">Glycoprotein</keyword>
<keyword id="KW-0393">Immunoglobulin domain</keyword>
<keyword id="KW-0472">Membrane</keyword>
<keyword id="KW-1185">Reference proteome</keyword>
<keyword id="KW-0732">Signal</keyword>
<keyword id="KW-0812">Transmembrane</keyword>
<keyword id="KW-1133">Transmembrane helix</keyword>
<protein>
    <recommendedName>
        <fullName>Myelin-oligodendrocyte glycoprotein</fullName>
    </recommendedName>
</protein>
<name>MOG_MOUSE</name>
<evidence type="ECO:0000255" key="1"/>
<evidence type="ECO:0000255" key="2">
    <source>
        <dbReference type="PROSITE-ProRule" id="PRU00114"/>
    </source>
</evidence>
<evidence type="ECO:0000269" key="3">
    <source>
    </source>
</evidence>
<evidence type="ECO:0000269" key="4">
    <source>
    </source>
</evidence>
<evidence type="ECO:0000305" key="5"/>
<evidence type="ECO:0007829" key="6">
    <source>
        <dbReference type="PDB" id="1PY9"/>
    </source>
</evidence>
<reference key="1">
    <citation type="journal article" date="1994" name="Genomics">
        <title>Structure and polymorphism of the mouse myelin/oligodendrocyte glycoprotein gene.</title>
        <authorList>
            <person name="Daubas P."/>
            <person name="Pham-Dinh D."/>
            <person name="Dautigny A."/>
        </authorList>
    </citation>
    <scope>NUCLEOTIDE SEQUENCE [GENOMIC DNA]</scope>
    <source>
        <strain>129</strain>
    </source>
</reference>
<reference key="2">
    <citation type="journal article" date="1993" name="Trans. Am. Soc. Neurochem.">
        <title>Murine and human MOG are highly conserved: cDNA analysis.</title>
        <authorList>
            <person name="Gardinier M.V."/>
            <person name="Matthieu J.-M."/>
        </authorList>
    </citation>
    <scope>NUCLEOTIDE SEQUENCE</scope>
</reference>
<reference key="3">
    <citation type="journal article" date="1993" name="Proc. Natl. Acad. Sci. U.S.A.">
        <title>Myelin/oligodendrocyte glycoprotein is a member of a subset of the immunoglobulin superfamily encoded within the major histocompatibility complex.</title>
        <authorList>
            <person name="Pham-Dinh D."/>
            <person name="Mattei M.-G."/>
            <person name="Nussbaum J.-L."/>
            <person name="Roussel G."/>
            <person name="Pontarotti P."/>
            <person name="Roeckel N."/>
            <person name="Mather I.H."/>
            <person name="Artzt K."/>
            <person name="Lindahl K.F."/>
            <person name="Dautigny A."/>
        </authorList>
    </citation>
    <scope>NUCLEOTIDE SEQUENCE [MRNA] OF 29-246</scope>
    <source>
        <strain>BALB/cJ</strain>
        <tissue>Brain</tissue>
    </source>
</reference>
<reference key="4">
    <citation type="journal article" date="1992" name="J. Neurochem.">
        <title>Purification and partial structural and functional characterization of mouse myelin/oligodendrocyte glycoprotein.</title>
        <authorList>
            <person name="Amiguet P."/>
            <person name="Gardinier M.V."/>
            <person name="Zanetta J.-P."/>
            <person name="Matthieu J.-M."/>
        </authorList>
    </citation>
    <scope>PROTEIN SEQUENCE OF 29-54</scope>
    <scope>TISSUE SPECIFICITY</scope>
    <source>
        <strain>BALB/cJ</strain>
        <tissue>Brain</tissue>
    </source>
</reference>
<reference key="5">
    <citation type="submission" date="2007-04" db="UniProtKB">
        <authorList>
            <person name="Lubec G."/>
            <person name="Kang S.U."/>
        </authorList>
    </citation>
    <scope>PROTEIN SEQUENCE OF 33-53; 81-94; 97-101; 118-142; 185-194 AND 234-246</scope>
    <scope>IDENTIFICATION BY MASS SPECTROMETRY</scope>
    <source>
        <strain>C57BL/6J</strain>
        <tissue>Brain</tissue>
    </source>
</reference>
<reference key="6">
    <citation type="journal article" date="2010" name="Cell">
        <title>A tissue-specific atlas of mouse protein phosphorylation and expression.</title>
        <authorList>
            <person name="Huttlin E.L."/>
            <person name="Jedrychowski M.P."/>
            <person name="Elias J.E."/>
            <person name="Goswami T."/>
            <person name="Rad R."/>
            <person name="Beausoleil S.A."/>
            <person name="Villen J."/>
            <person name="Haas W."/>
            <person name="Sowa M.E."/>
            <person name="Gygi S.P."/>
        </authorList>
    </citation>
    <scope>IDENTIFICATION BY MASS SPECTROMETRY [LARGE SCALE ANALYSIS]</scope>
    <source>
        <tissue>Brain</tissue>
    </source>
</reference>
<reference key="7">
    <citation type="journal article" date="2003" name="Proc. Natl. Acad. Sci. U.S.A.">
        <title>The crystal structure of myelin oligodendrocyte glycoprotein, a key autoantigen in multiple sclerosis.</title>
        <authorList>
            <person name="Clements C.S."/>
            <person name="Reid H.H."/>
            <person name="Beddoe T."/>
            <person name="Tynan F.E."/>
            <person name="Perugini M.A."/>
            <person name="Johns T.G."/>
            <person name="Bernard C.C."/>
            <person name="Rossjohn J."/>
        </authorList>
    </citation>
    <scope>X-RAY CRYSTALLOGRAPHY (1.8 ANGSTROMS) OF 30-145</scope>
    <scope>SUBUNIT</scope>
    <scope>FUNCTION</scope>
    <scope>DISULFIDE BOND</scope>
</reference>
<feature type="signal peptide" evidence="4">
    <location>
        <begin position="1"/>
        <end position="28"/>
    </location>
</feature>
<feature type="chain" id="PRO_0000014889" description="Myelin-oligodendrocyte glycoprotein">
    <location>
        <begin position="29"/>
        <end position="246"/>
    </location>
</feature>
<feature type="topological domain" description="Extracellular" evidence="1">
    <location>
        <begin position="29"/>
        <end position="156"/>
    </location>
</feature>
<feature type="transmembrane region" description="Helical" evidence="1">
    <location>
        <begin position="157"/>
        <end position="177"/>
    </location>
</feature>
<feature type="topological domain" description="Cytoplasmic" evidence="1">
    <location>
        <begin position="178"/>
        <end position="209"/>
    </location>
</feature>
<feature type="transmembrane region" description="Helical" evidence="1">
    <location>
        <begin position="210"/>
        <end position="230"/>
    </location>
</feature>
<feature type="topological domain" description="Extracellular" evidence="1">
    <location>
        <begin position="231"/>
        <end position="246"/>
    </location>
</feature>
<feature type="domain" description="Ig-like V-type">
    <location>
        <begin position="31"/>
        <end position="144"/>
    </location>
</feature>
<feature type="glycosylation site" description="N-linked (GlcNAc...) asparagine" evidence="1">
    <location>
        <position position="59"/>
    </location>
</feature>
<feature type="disulfide bond" evidence="2 3">
    <location>
        <begin position="52"/>
        <end position="126"/>
    </location>
</feature>
<feature type="sequence conflict" description="In Ref. 2." evidence="5" ref="2">
    <original>L</original>
    <variation>LL</variation>
    <location>
        <position position="21"/>
    </location>
</feature>
<feature type="sequence conflict" description="In Ref. 4; AA sequence." evidence="5" ref="4">
    <original>R</original>
    <variation>G</variation>
    <location>
        <position position="32"/>
    </location>
</feature>
<feature type="sequence conflict" description="In Ref. 3." evidence="5" ref="3">
    <original>G</original>
    <variation>E</variation>
    <location>
        <position position="95"/>
    </location>
</feature>
<feature type="sequence conflict" description="In Ref. 2; AAB08096." evidence="5" ref="2">
    <original>P</original>
    <variation>S</variation>
    <location>
        <position position="169"/>
    </location>
</feature>
<feature type="strand" evidence="6">
    <location>
        <begin position="32"/>
        <end position="34"/>
    </location>
</feature>
<feature type="strand" evidence="6">
    <location>
        <begin position="40"/>
        <end position="43"/>
    </location>
</feature>
<feature type="strand" evidence="6">
    <location>
        <begin position="48"/>
        <end position="56"/>
    </location>
</feature>
<feature type="strand" evidence="6">
    <location>
        <begin position="63"/>
        <end position="72"/>
    </location>
</feature>
<feature type="strand" evidence="6">
    <location>
        <begin position="75"/>
        <end position="80"/>
    </location>
</feature>
<feature type="helix" evidence="6">
    <location>
        <begin position="86"/>
        <end position="88"/>
    </location>
</feature>
<feature type="helix" evidence="6">
    <location>
        <begin position="91"/>
        <end position="93"/>
    </location>
</feature>
<feature type="turn" evidence="6">
    <location>
        <begin position="94"/>
        <end position="96"/>
    </location>
</feature>
<feature type="strand" evidence="6">
    <location>
        <begin position="97"/>
        <end position="100"/>
    </location>
</feature>
<feature type="helix" evidence="6">
    <location>
        <begin position="104"/>
        <end position="106"/>
    </location>
</feature>
<feature type="strand" evidence="6">
    <location>
        <begin position="108"/>
        <end position="115"/>
    </location>
</feature>
<feature type="helix" evidence="6">
    <location>
        <begin position="118"/>
        <end position="120"/>
    </location>
</feature>
<feature type="strand" evidence="6">
    <location>
        <begin position="122"/>
        <end position="130"/>
    </location>
</feature>
<feature type="strand" evidence="6">
    <location>
        <begin position="133"/>
        <end position="144"/>
    </location>
</feature>
<organism>
    <name type="scientific">Mus musculus</name>
    <name type="common">Mouse</name>
    <dbReference type="NCBI Taxonomy" id="10090"/>
    <lineage>
        <taxon>Eukaryota</taxon>
        <taxon>Metazoa</taxon>
        <taxon>Chordata</taxon>
        <taxon>Craniata</taxon>
        <taxon>Vertebrata</taxon>
        <taxon>Euteleostomi</taxon>
        <taxon>Mammalia</taxon>
        <taxon>Eutheria</taxon>
        <taxon>Euarchontoglires</taxon>
        <taxon>Glires</taxon>
        <taxon>Rodentia</taxon>
        <taxon>Myomorpha</taxon>
        <taxon>Muroidea</taxon>
        <taxon>Muridae</taxon>
        <taxon>Murinae</taxon>
        <taxon>Mus</taxon>
        <taxon>Mus</taxon>
    </lineage>
</organism>
<comment type="function">
    <text evidence="3">Minor component of the myelin sheath. May be involved in completion and/or maintenance of the myelin sheath and in cell-cell communication. Mediates homophilic cell-cell adhesion.</text>
</comment>
<comment type="subunit">
    <text evidence="3">Homodimer.</text>
</comment>
<comment type="subcellular location">
    <subcellularLocation>
        <location>Membrane</location>
        <topology>Multi-pass membrane protein</topology>
    </subcellularLocation>
</comment>
<comment type="tissue specificity">
    <text evidence="4">Found exclusively in the CNS, where it is localized on the surface of myelin and oligodendrocyte cytoplasmic membranes. Reduced expression levels are observed in jimpy and quacking dysmyelinating mutant mice.</text>
</comment>
<comment type="similarity">
    <text evidence="5">Belongs to the immunoglobulin superfamily. BTN/MOG family.</text>
</comment>
<comment type="caution">
    <text evidence="5">Do not confuse myelin-oligodendrocyte glycoprotein (MOG) with oligodendrocyte-myelin glycoprotein (OMG).</text>
</comment>
<sequence>MACLWSFSWPSCFLSLLLLLLQLSCSYAGQFRVIGPGYPIRALVGDEAELPCRISPGKNATGMEVGWYRSPFSRVVHLYRNGKDQDAEQAPEYRGRTELLKETISEGKVTLRIQNVRFSDEGGYTCFFRDHSYQEEAAMELKVEDPFYWVNPGVLTLIALVPTILLQVPVGLVFLFLQHRLRGKLRAEVENLHRTFDPHFLRVPCWKITLFVIVPVLGPLVALIICYNWLHRRLAGQFLEELRNPF</sequence>
<proteinExistence type="evidence at protein level"/>